<organism>
    <name type="scientific">Escherichia coli O45:K1 (strain S88 / ExPEC)</name>
    <dbReference type="NCBI Taxonomy" id="585035"/>
    <lineage>
        <taxon>Bacteria</taxon>
        <taxon>Pseudomonadati</taxon>
        <taxon>Pseudomonadota</taxon>
        <taxon>Gammaproteobacteria</taxon>
        <taxon>Enterobacterales</taxon>
        <taxon>Enterobacteriaceae</taxon>
        <taxon>Escherichia</taxon>
    </lineage>
</organism>
<reference key="1">
    <citation type="journal article" date="2009" name="PLoS Genet.">
        <title>Organised genome dynamics in the Escherichia coli species results in highly diverse adaptive paths.</title>
        <authorList>
            <person name="Touchon M."/>
            <person name="Hoede C."/>
            <person name="Tenaillon O."/>
            <person name="Barbe V."/>
            <person name="Baeriswyl S."/>
            <person name="Bidet P."/>
            <person name="Bingen E."/>
            <person name="Bonacorsi S."/>
            <person name="Bouchier C."/>
            <person name="Bouvet O."/>
            <person name="Calteau A."/>
            <person name="Chiapello H."/>
            <person name="Clermont O."/>
            <person name="Cruveiller S."/>
            <person name="Danchin A."/>
            <person name="Diard M."/>
            <person name="Dossat C."/>
            <person name="Karoui M.E."/>
            <person name="Frapy E."/>
            <person name="Garry L."/>
            <person name="Ghigo J.M."/>
            <person name="Gilles A.M."/>
            <person name="Johnson J."/>
            <person name="Le Bouguenec C."/>
            <person name="Lescat M."/>
            <person name="Mangenot S."/>
            <person name="Martinez-Jehanne V."/>
            <person name="Matic I."/>
            <person name="Nassif X."/>
            <person name="Oztas S."/>
            <person name="Petit M.A."/>
            <person name="Pichon C."/>
            <person name="Rouy Z."/>
            <person name="Ruf C.S."/>
            <person name="Schneider D."/>
            <person name="Tourret J."/>
            <person name="Vacherie B."/>
            <person name="Vallenet D."/>
            <person name="Medigue C."/>
            <person name="Rocha E.P.C."/>
            <person name="Denamur E."/>
        </authorList>
    </citation>
    <scope>NUCLEOTIDE SEQUENCE [LARGE SCALE GENOMIC DNA]</scope>
    <source>
        <strain>S88 / ExPEC</strain>
    </source>
</reference>
<gene>
    <name evidence="1" type="primary">tusB</name>
    <name type="ordered locus">ECS88_3731</name>
</gene>
<sequence length="95" mass="10720">MLHTLHRSPWLTDFAALLRLLSEGDELLLLQDGVTAAVDGNRYLESLRNAPIKVYALNEDLIARGLTGRISNDIIPIDYTDFVRLTVKHSSQMAW</sequence>
<protein>
    <recommendedName>
        <fullName evidence="1">Protein TusB</fullName>
    </recommendedName>
    <alternativeName>
        <fullName evidence="1">tRNA 2-thiouridine synthesizing protein B</fullName>
    </alternativeName>
</protein>
<name>TUSB_ECO45</name>
<proteinExistence type="inferred from homology"/>
<accession>B7MCV8</accession>
<feature type="chain" id="PRO_1000147175" description="Protein TusB">
    <location>
        <begin position="1"/>
        <end position="95"/>
    </location>
</feature>
<evidence type="ECO:0000255" key="1">
    <source>
        <dbReference type="HAMAP-Rule" id="MF_01564"/>
    </source>
</evidence>
<keyword id="KW-0963">Cytoplasm</keyword>
<keyword id="KW-1185">Reference proteome</keyword>
<keyword id="KW-0819">tRNA processing</keyword>
<dbReference type="EMBL" id="CU928161">
    <property type="protein sequence ID" value="CAR04947.1"/>
    <property type="molecule type" value="Genomic_DNA"/>
</dbReference>
<dbReference type="RefSeq" id="WP_000903381.1">
    <property type="nucleotide sequence ID" value="NC_011742.1"/>
</dbReference>
<dbReference type="SMR" id="B7MCV8"/>
<dbReference type="KEGG" id="ecz:ECS88_3731"/>
<dbReference type="HOGENOM" id="CLU_166087_2_1_6"/>
<dbReference type="Proteomes" id="UP000000747">
    <property type="component" value="Chromosome"/>
</dbReference>
<dbReference type="GO" id="GO:1990228">
    <property type="term" value="C:sulfurtransferase complex"/>
    <property type="evidence" value="ECO:0007669"/>
    <property type="project" value="TreeGrafter"/>
</dbReference>
<dbReference type="GO" id="GO:0002143">
    <property type="term" value="P:tRNA wobble position uridine thiolation"/>
    <property type="evidence" value="ECO:0007669"/>
    <property type="project" value="InterPro"/>
</dbReference>
<dbReference type="FunFam" id="3.40.1260.10:FF:000002">
    <property type="entry name" value="Sulfurtransferase TusB"/>
    <property type="match status" value="1"/>
</dbReference>
<dbReference type="Gene3D" id="3.40.1260.10">
    <property type="entry name" value="DsrEFH-like"/>
    <property type="match status" value="1"/>
</dbReference>
<dbReference type="HAMAP" id="MF_01564">
    <property type="entry name" value="Thiourid_synth_B"/>
    <property type="match status" value="1"/>
</dbReference>
<dbReference type="InterPro" id="IPR027396">
    <property type="entry name" value="DsrEFH-like"/>
</dbReference>
<dbReference type="InterPro" id="IPR023526">
    <property type="entry name" value="Sulphur_relay_TusB"/>
</dbReference>
<dbReference type="InterPro" id="IPR007215">
    <property type="entry name" value="Sulphur_relay_TusB/DsrH"/>
</dbReference>
<dbReference type="NCBIfam" id="NF010035">
    <property type="entry name" value="PRK13510.1"/>
    <property type="match status" value="1"/>
</dbReference>
<dbReference type="NCBIfam" id="TIGR03011">
    <property type="entry name" value="sulf_tusB_dsrH"/>
    <property type="match status" value="1"/>
</dbReference>
<dbReference type="PANTHER" id="PTHR37526">
    <property type="entry name" value="PROTEIN TUSB"/>
    <property type="match status" value="1"/>
</dbReference>
<dbReference type="PANTHER" id="PTHR37526:SF1">
    <property type="entry name" value="PROTEIN TUSB"/>
    <property type="match status" value="1"/>
</dbReference>
<dbReference type="Pfam" id="PF04077">
    <property type="entry name" value="DsrH"/>
    <property type="match status" value="1"/>
</dbReference>
<dbReference type="SUPFAM" id="SSF75169">
    <property type="entry name" value="DsrEFH-like"/>
    <property type="match status" value="1"/>
</dbReference>
<comment type="function">
    <text evidence="1">Part of a sulfur-relay system required for 2-thiolation of 5-methylaminomethyl-2-thiouridine (mnm(5)s(2)U) at tRNA wobble positions.</text>
</comment>
<comment type="subunit">
    <text evidence="1">Heterohexamer, formed by a dimer of trimers. The hexameric TusBCD complex contains 2 copies each of TusB, TusC and TusD. The TusBCD complex interacts with TusE.</text>
</comment>
<comment type="subcellular location">
    <subcellularLocation>
        <location evidence="1">Cytoplasm</location>
    </subcellularLocation>
</comment>
<comment type="similarity">
    <text evidence="1">Belongs to the DsrH/TusB family.</text>
</comment>